<dbReference type="EC" id="2.7.6.1" evidence="1"/>
<dbReference type="EMBL" id="BA000011">
    <property type="protein sequence ID" value="BAB59339.1"/>
    <property type="molecule type" value="Genomic_DNA"/>
</dbReference>
<dbReference type="RefSeq" id="WP_010916453.1">
    <property type="nucleotide sequence ID" value="NC_002689.2"/>
</dbReference>
<dbReference type="PDB" id="3LPN">
    <property type="method" value="X-ray"/>
    <property type="resolution" value="1.80 A"/>
    <property type="chains" value="A/B=1-286"/>
</dbReference>
<dbReference type="PDB" id="3LRT">
    <property type="method" value="X-ray"/>
    <property type="resolution" value="1.53 A"/>
    <property type="chains" value="A/B=1-286"/>
</dbReference>
<dbReference type="PDB" id="3MBI">
    <property type="method" value="X-ray"/>
    <property type="resolution" value="1.80 A"/>
    <property type="chains" value="A/B/C/D=1-285"/>
</dbReference>
<dbReference type="PDB" id="3NAG">
    <property type="method" value="X-ray"/>
    <property type="resolution" value="1.75 A"/>
    <property type="chains" value="A/B=1-286"/>
</dbReference>
<dbReference type="PDBsum" id="3LPN"/>
<dbReference type="PDBsum" id="3LRT"/>
<dbReference type="PDBsum" id="3MBI"/>
<dbReference type="PDBsum" id="3NAG"/>
<dbReference type="SMR" id="Q97CA5"/>
<dbReference type="STRING" id="273116.gene:9380967"/>
<dbReference type="PaxDb" id="273116-14324411"/>
<dbReference type="GeneID" id="1441683"/>
<dbReference type="KEGG" id="tvo:TVG0201915"/>
<dbReference type="eggNOG" id="arCOG00067">
    <property type="taxonomic scope" value="Archaea"/>
</dbReference>
<dbReference type="HOGENOM" id="CLU_033546_2_2_2"/>
<dbReference type="OrthoDB" id="371997at2157"/>
<dbReference type="PhylomeDB" id="Q97CA5"/>
<dbReference type="BRENDA" id="2.7.6.1">
    <property type="organism ID" value="6326"/>
</dbReference>
<dbReference type="UniPathway" id="UPA00087">
    <property type="reaction ID" value="UER00172"/>
</dbReference>
<dbReference type="EvolutionaryTrace" id="Q97CA5"/>
<dbReference type="Proteomes" id="UP000001017">
    <property type="component" value="Chromosome"/>
</dbReference>
<dbReference type="GO" id="GO:0005737">
    <property type="term" value="C:cytoplasm"/>
    <property type="evidence" value="ECO:0007669"/>
    <property type="project" value="UniProtKB-SubCell"/>
</dbReference>
<dbReference type="GO" id="GO:0002189">
    <property type="term" value="C:ribose phosphate diphosphokinase complex"/>
    <property type="evidence" value="ECO:0007669"/>
    <property type="project" value="TreeGrafter"/>
</dbReference>
<dbReference type="GO" id="GO:0005524">
    <property type="term" value="F:ATP binding"/>
    <property type="evidence" value="ECO:0007669"/>
    <property type="project" value="UniProtKB-KW"/>
</dbReference>
<dbReference type="GO" id="GO:0016301">
    <property type="term" value="F:kinase activity"/>
    <property type="evidence" value="ECO:0007669"/>
    <property type="project" value="UniProtKB-KW"/>
</dbReference>
<dbReference type="GO" id="GO:0000287">
    <property type="term" value="F:magnesium ion binding"/>
    <property type="evidence" value="ECO:0007669"/>
    <property type="project" value="UniProtKB-UniRule"/>
</dbReference>
<dbReference type="GO" id="GO:0004749">
    <property type="term" value="F:ribose phosphate diphosphokinase activity"/>
    <property type="evidence" value="ECO:0007669"/>
    <property type="project" value="UniProtKB-UniRule"/>
</dbReference>
<dbReference type="GO" id="GO:0006015">
    <property type="term" value="P:5-phosphoribose 1-diphosphate biosynthetic process"/>
    <property type="evidence" value="ECO:0007669"/>
    <property type="project" value="UniProtKB-UniRule"/>
</dbReference>
<dbReference type="GO" id="GO:0006164">
    <property type="term" value="P:purine nucleotide biosynthetic process"/>
    <property type="evidence" value="ECO:0007669"/>
    <property type="project" value="TreeGrafter"/>
</dbReference>
<dbReference type="CDD" id="cd06223">
    <property type="entry name" value="PRTases_typeI"/>
    <property type="match status" value="1"/>
</dbReference>
<dbReference type="FunFam" id="3.40.50.2020:FF:000014">
    <property type="entry name" value="Ribose-phosphate pyrophosphokinase 1"/>
    <property type="match status" value="1"/>
</dbReference>
<dbReference type="Gene3D" id="3.40.50.2020">
    <property type="match status" value="2"/>
</dbReference>
<dbReference type="HAMAP" id="MF_00583_A">
    <property type="entry name" value="RibP_PPkinase_A"/>
    <property type="match status" value="1"/>
</dbReference>
<dbReference type="InterPro" id="IPR029099">
    <property type="entry name" value="Pribosyltran_N"/>
</dbReference>
<dbReference type="InterPro" id="IPR000836">
    <property type="entry name" value="PRibTrfase_dom"/>
</dbReference>
<dbReference type="InterPro" id="IPR029057">
    <property type="entry name" value="PRTase-like"/>
</dbReference>
<dbReference type="InterPro" id="IPR005946">
    <property type="entry name" value="Rib-P_diPkinase"/>
</dbReference>
<dbReference type="InterPro" id="IPR037514">
    <property type="entry name" value="Rib-P_diPkinase_arc"/>
</dbReference>
<dbReference type="NCBIfam" id="NF002095">
    <property type="entry name" value="PRK00934.1"/>
    <property type="match status" value="1"/>
</dbReference>
<dbReference type="NCBIfam" id="TIGR01251">
    <property type="entry name" value="ribP_PPkin"/>
    <property type="match status" value="1"/>
</dbReference>
<dbReference type="PANTHER" id="PTHR10210">
    <property type="entry name" value="RIBOSE-PHOSPHATE DIPHOSPHOKINASE FAMILY MEMBER"/>
    <property type="match status" value="1"/>
</dbReference>
<dbReference type="PANTHER" id="PTHR10210:SF32">
    <property type="entry name" value="RIBOSE-PHOSPHATE PYROPHOSPHOKINASE 2"/>
    <property type="match status" value="1"/>
</dbReference>
<dbReference type="Pfam" id="PF00156">
    <property type="entry name" value="Pribosyltran"/>
    <property type="match status" value="1"/>
</dbReference>
<dbReference type="Pfam" id="PF13793">
    <property type="entry name" value="Pribosyltran_N"/>
    <property type="match status" value="1"/>
</dbReference>
<dbReference type="SMART" id="SM01400">
    <property type="entry name" value="Pribosyltran_N"/>
    <property type="match status" value="1"/>
</dbReference>
<dbReference type="SUPFAM" id="SSF53271">
    <property type="entry name" value="PRTase-like"/>
    <property type="match status" value="1"/>
</dbReference>
<feature type="chain" id="PRO_0000141251" description="Ribose-phosphate pyrophosphokinase">
    <location>
        <begin position="1"/>
        <end position="286"/>
    </location>
</feature>
<feature type="active site" evidence="5 8">
    <location>
        <position position="184"/>
    </location>
</feature>
<feature type="binding site" evidence="1 2 6 7 8 9">
    <location>
        <begin position="34"/>
        <end position="36"/>
    </location>
    <ligand>
        <name>ATP</name>
        <dbReference type="ChEBI" id="CHEBI:30616"/>
    </ligand>
</feature>
<feature type="binding site" evidence="2 6 7 8 9">
    <location>
        <begin position="91"/>
        <end position="93"/>
    </location>
    <ligand>
        <name>ATP</name>
        <dbReference type="ChEBI" id="CHEBI:30616"/>
    </ligand>
</feature>
<feature type="binding site" evidence="1 4">
    <location>
        <position position="124"/>
    </location>
    <ligand>
        <name>Mg(2+)</name>
        <dbReference type="ChEBI" id="CHEBI:18420"/>
        <label>1</label>
    </ligand>
</feature>
<feature type="binding site" evidence="1">
    <location>
        <position position="161"/>
    </location>
    <ligand>
        <name>Mg(2+)</name>
        <dbReference type="ChEBI" id="CHEBI:18420"/>
        <label>2</label>
    </ligand>
</feature>
<feature type="binding site" evidence="1 2 8">
    <location>
        <position position="186"/>
    </location>
    <ligand>
        <name>D-ribose 5-phosphate</name>
        <dbReference type="ChEBI" id="CHEBI:78346"/>
    </ligand>
</feature>
<feature type="binding site" evidence="1 2 8">
    <location>
        <position position="210"/>
    </location>
    <ligand>
        <name>D-ribose 5-phosphate</name>
        <dbReference type="ChEBI" id="CHEBI:78346"/>
    </ligand>
</feature>
<feature type="binding site" evidence="1 2 6 7 8 9">
    <location>
        <begin position="214"/>
        <end position="218"/>
    </location>
    <ligand>
        <name>D-ribose 5-phosphate</name>
        <dbReference type="ChEBI" id="CHEBI:78346"/>
    </ligand>
</feature>
<feature type="strand" evidence="10">
    <location>
        <begin position="2"/>
        <end position="5"/>
    </location>
</feature>
<feature type="helix" evidence="10">
    <location>
        <begin position="7"/>
        <end position="9"/>
    </location>
</feature>
<feature type="helix" evidence="10">
    <location>
        <begin position="10"/>
        <end position="19"/>
    </location>
</feature>
<feature type="strand" evidence="10">
    <location>
        <begin position="28"/>
        <end position="31"/>
    </location>
</feature>
<feature type="strand" evidence="10">
    <location>
        <begin position="37"/>
        <end position="40"/>
    </location>
</feature>
<feature type="strand" evidence="10">
    <location>
        <begin position="48"/>
        <end position="53"/>
    </location>
</feature>
<feature type="helix" evidence="10">
    <location>
        <begin position="59"/>
        <end position="71"/>
    </location>
</feature>
<feature type="helix" evidence="10">
    <location>
        <begin position="72"/>
        <end position="74"/>
    </location>
</feature>
<feature type="strand" evidence="10">
    <location>
        <begin position="78"/>
        <end position="86"/>
    </location>
</feature>
<feature type="turn" evidence="10">
    <location>
        <begin position="88"/>
        <end position="91"/>
    </location>
</feature>
<feature type="helix" evidence="10">
    <location>
        <begin position="103"/>
        <end position="113"/>
    </location>
</feature>
<feature type="strand" evidence="10">
    <location>
        <begin position="116"/>
        <end position="122"/>
    </location>
</feature>
<feature type="helix" evidence="10">
    <location>
        <begin position="126"/>
        <end position="131"/>
    </location>
</feature>
<feature type="strand" evidence="10">
    <location>
        <begin position="133"/>
        <end position="139"/>
    </location>
</feature>
<feature type="helix" evidence="10">
    <location>
        <begin position="142"/>
        <end position="149"/>
    </location>
</feature>
<feature type="strand" evidence="10">
    <location>
        <begin position="155"/>
        <end position="164"/>
    </location>
</feature>
<feature type="helix" evidence="10">
    <location>
        <begin position="165"/>
        <end position="175"/>
    </location>
</feature>
<feature type="strand" evidence="10">
    <location>
        <begin position="178"/>
        <end position="187"/>
    </location>
</feature>
<feature type="strand" evidence="10">
    <location>
        <begin position="190"/>
        <end position="197"/>
    </location>
</feature>
<feature type="strand" evidence="10">
    <location>
        <begin position="205"/>
        <end position="215"/>
    </location>
</feature>
<feature type="helix" evidence="10">
    <location>
        <begin position="217"/>
        <end position="228"/>
    </location>
</feature>
<feature type="strand" evidence="10">
    <location>
        <begin position="232"/>
        <end position="241"/>
    </location>
</feature>
<feature type="helix" evidence="10">
    <location>
        <begin position="247"/>
        <end position="251"/>
    </location>
</feature>
<feature type="turn" evidence="10">
    <location>
        <begin position="252"/>
        <end position="254"/>
    </location>
</feature>
<feature type="strand" evidence="10">
    <location>
        <begin position="256"/>
        <end position="264"/>
    </location>
</feature>
<feature type="strand" evidence="10">
    <location>
        <begin position="269"/>
        <end position="271"/>
    </location>
</feature>
<feature type="helix" evidence="10">
    <location>
        <begin position="274"/>
        <end position="283"/>
    </location>
</feature>
<proteinExistence type="evidence at protein level"/>
<comment type="function">
    <text evidence="1">Involved in the biosynthesis of the central metabolite phospho-alpha-D-ribosyl-1-pyrophosphate (PRPP) via the transfer of pyrophosphoryl group from ATP to 1-hydroxyl of ribose-5-phosphate (Rib-5-P).</text>
</comment>
<comment type="catalytic activity">
    <reaction evidence="1">
        <text>D-ribose 5-phosphate + ATP = 5-phospho-alpha-D-ribose 1-diphosphate + AMP + H(+)</text>
        <dbReference type="Rhea" id="RHEA:15609"/>
        <dbReference type="ChEBI" id="CHEBI:15378"/>
        <dbReference type="ChEBI" id="CHEBI:30616"/>
        <dbReference type="ChEBI" id="CHEBI:58017"/>
        <dbReference type="ChEBI" id="CHEBI:78346"/>
        <dbReference type="ChEBI" id="CHEBI:456215"/>
        <dbReference type="EC" id="2.7.6.1"/>
    </reaction>
</comment>
<comment type="cofactor">
    <cofactor evidence="1 4">
        <name>Mg(2+)</name>
        <dbReference type="ChEBI" id="CHEBI:18420"/>
    </cofactor>
    <text evidence="1">Binds 2 Mg(2+) ions per subunit.</text>
</comment>
<comment type="pathway">
    <text evidence="1">Metabolic intermediate biosynthesis; 5-phospho-alpha-D-ribose 1-diphosphate biosynthesis; 5-phospho-alpha-D-ribose 1-diphosphate from D-ribose 5-phosphate (route I): step 1/1.</text>
</comment>
<comment type="subunit">
    <text evidence="2">Homodimer.</text>
</comment>
<comment type="subcellular location">
    <subcellularLocation>
        <location evidence="1">Cytoplasm</location>
    </subcellularLocation>
</comment>
<comment type="similarity">
    <text evidence="1 4">Belongs to the ribose-phosphate pyrophosphokinase family. Class III (archaeal) subfamily.</text>
</comment>
<gene>
    <name evidence="1" type="primary">prs</name>
    <name type="ordered locus">TV0197</name>
    <name type="ORF">TVG0201915</name>
</gene>
<accession>Q97CA5</accession>
<keyword id="KW-0002">3D-structure</keyword>
<keyword id="KW-0067">ATP-binding</keyword>
<keyword id="KW-0963">Cytoplasm</keyword>
<keyword id="KW-0418">Kinase</keyword>
<keyword id="KW-0460">Magnesium</keyword>
<keyword id="KW-0479">Metal-binding</keyword>
<keyword id="KW-0545">Nucleotide biosynthesis</keyword>
<keyword id="KW-0547">Nucleotide-binding</keyword>
<keyword id="KW-0808">Transferase</keyword>
<reference key="1">
    <citation type="journal article" date="2000" name="Proc. Natl. Acad. Sci. U.S.A.">
        <title>Archaeal adaptation to higher temperatures revealed by genomic sequence of Thermoplasma volcanium.</title>
        <authorList>
            <person name="Kawashima T."/>
            <person name="Amano N."/>
            <person name="Koike H."/>
            <person name="Makino S."/>
            <person name="Higuchi S."/>
            <person name="Kawashima-Ohya Y."/>
            <person name="Watanabe K."/>
            <person name="Yamazaki M."/>
            <person name="Kanehori K."/>
            <person name="Kawamoto T."/>
            <person name="Nunoshiba T."/>
            <person name="Yamamoto Y."/>
            <person name="Aramaki H."/>
            <person name="Makino K."/>
            <person name="Suzuki M."/>
        </authorList>
    </citation>
    <scope>NUCLEOTIDE SEQUENCE [LARGE SCALE GENOMIC DNA]</scope>
    <source>
        <strain>ATCC 51530 / DSM 4299 / JCM 9571 / NBRC 15438 / GSS1</strain>
    </source>
</reference>
<reference key="2">
    <citation type="journal article" date="2017" name="Microbiol. Mol. Biol. Rev.">
        <title>Phosphoribosyl diphosphate (PRPP): biosynthesis, enzymology, utilization, and metabolic significance.</title>
        <authorList>
            <person name="Hove-Jensen B."/>
            <person name="Andersen K.R."/>
            <person name="Kilstrup M."/>
            <person name="Martinussen J."/>
            <person name="Switzer R.L."/>
            <person name="Willemoes M."/>
        </authorList>
    </citation>
    <scope>REVIEW</scope>
    <scope>COFACTOR</scope>
</reference>
<reference key="3">
    <citation type="journal article" date="2011" name="J. Mol. Biol.">
        <title>The structures of Thermoplasma volcanium phosphoribosyl pyrophosphate synthetase bound to ribose-5-phosphate and ATP analogs.</title>
        <authorList>
            <person name="Cherney M.M."/>
            <person name="Cherney L.T."/>
            <person name="Garen C.R."/>
            <person name="James M.N."/>
        </authorList>
    </citation>
    <scope>X-RAY CRYSTALLOGRAPHY (1.53 ANGSTROMS) IN COMPLEX WITH SUBSTRATE ANALOGS</scope>
    <scope>ACTIVE SITE</scope>
    <scope>SUBUNIT</scope>
</reference>
<sequence>MKIIALRSSLKLAARIAEELKTEPVMPDERRFPDGELYLRYDEDLTGHNIFIIGNTHSDAEVMEMILTLSAIQDYRTKSVNIIAPYYGYARQHQRYKNGEPISSQILTEIYSSYSNSIATVDIHDEKTLSYSKVKFSDLHANDAIVRYYKNVDVDYVVSPDDGGLARVADISAKLGKKHFFIEKKRIDDRTVEMKVPNVDVNGKKLLIVDDIISTGGTIAKSSGLLREKGASKIYVSAVHGLFVNGSENKILQNADEIHVTDTVESKFSDISVYQEVCNYIRDIDA</sequence>
<name>KPRS_THEVO</name>
<evidence type="ECO:0000255" key="1">
    <source>
        <dbReference type="HAMAP-Rule" id="MF_00583"/>
    </source>
</evidence>
<evidence type="ECO:0000269" key="2">
    <source>
    </source>
</evidence>
<evidence type="ECO:0000303" key="3">
    <source>
    </source>
</evidence>
<evidence type="ECO:0000303" key="4">
    <source>
    </source>
</evidence>
<evidence type="ECO:0000305" key="5">
    <source>
    </source>
</evidence>
<evidence type="ECO:0007744" key="6">
    <source>
        <dbReference type="PDB" id="3LPN"/>
    </source>
</evidence>
<evidence type="ECO:0007744" key="7">
    <source>
        <dbReference type="PDB" id="3LRT"/>
    </source>
</evidence>
<evidence type="ECO:0007744" key="8">
    <source>
        <dbReference type="PDB" id="3MBI"/>
    </source>
</evidence>
<evidence type="ECO:0007744" key="9">
    <source>
        <dbReference type="PDB" id="3NAG"/>
    </source>
</evidence>
<evidence type="ECO:0007829" key="10">
    <source>
        <dbReference type="PDB" id="3LRT"/>
    </source>
</evidence>
<organism>
    <name type="scientific">Thermoplasma volcanium (strain ATCC 51530 / DSM 4299 / JCM 9571 / NBRC 15438 / GSS1)</name>
    <dbReference type="NCBI Taxonomy" id="273116"/>
    <lineage>
        <taxon>Archaea</taxon>
        <taxon>Methanobacteriati</taxon>
        <taxon>Thermoplasmatota</taxon>
        <taxon>Thermoplasmata</taxon>
        <taxon>Thermoplasmatales</taxon>
        <taxon>Thermoplasmataceae</taxon>
        <taxon>Thermoplasma</taxon>
    </lineage>
</organism>
<protein>
    <recommendedName>
        <fullName evidence="1 3">Ribose-phosphate pyrophosphokinase</fullName>
        <shortName evidence="1 3">RPPK</shortName>
        <ecNumber evidence="1">2.7.6.1</ecNumber>
    </recommendedName>
    <alternativeName>
        <fullName evidence="1">5-phospho-D-ribosyl alpha-1-diphosphate synthase</fullName>
    </alternativeName>
    <alternativeName>
        <fullName evidence="1">Phosphoribosyl diphosphate synthase</fullName>
    </alternativeName>
    <alternativeName>
        <fullName evidence="1">Phosphoribosyl pyrophosphate synthase</fullName>
        <shortName evidence="1">P-Rib-PP synthase</shortName>
        <shortName evidence="1 3">PRPP synthase</shortName>
        <shortName evidence="1">PRPPase</shortName>
    </alternativeName>
</protein>